<proteinExistence type="inferred from homology"/>
<keyword id="KW-0810">Translation regulation</keyword>
<gene>
    <name type="primary">hpf</name>
</gene>
<protein>
    <recommendedName>
        <fullName>Ribosome hibernation promoting factor</fullName>
        <shortName>HPF</shortName>
    </recommendedName>
    <alternativeName>
        <fullName>Hibernation factor HPF</fullName>
    </alternativeName>
</protein>
<sequence>MQVNISGHQLDVTDALRDYVEEKISRLERHFDRITSVQVIMTVEKLKQKIEATLHVSGAEVVANAEHEDMYAAIDLLADKLDRQLIKHKEKQIERQQGQRPADSPVP</sequence>
<reference key="1">
    <citation type="journal article" date="1989" name="Mol. Microbiol.">
        <title>Mutations in genes downstream of the rpoN gene (encoding sigma 54) of Klebsiella pneumoniae affect expression from sigma 54-dependent promoters.</title>
        <authorList>
            <person name="Merrick M.J."/>
            <person name="Coppard J.R."/>
        </authorList>
    </citation>
    <scope>NUCLEOTIDE SEQUENCE [GENOMIC DNA]</scope>
    <source>
        <strain>ATCC 13705 / OP1 / DSM 366 / NCIMB 11614 / LMG 3878 / UW</strain>
    </source>
</reference>
<reference key="2">
    <citation type="journal article" date="1987" name="Mol. Gen. Genet.">
        <title>The nucleotide sequence of the sigma factor gene ntrA (rpoN) of Azotobacter vinelandii: analysis of conserved sequences in NtrA proteins.</title>
        <authorList>
            <person name="Merrick M.J."/>
            <person name="Gibbins J."/>
            <person name="Toukdarian A."/>
        </authorList>
    </citation>
    <scope>NUCLEOTIDE SEQUENCE [GENOMIC DNA] OF 1-75</scope>
    <source>
        <strain>ATCC 13705 / OP1 / DSM 366 / NCIMB 11614 / LMG 3878 / UW</strain>
    </source>
</reference>
<accession>P17160</accession>
<accession>P05405</accession>
<evidence type="ECO:0000250" key="1">
    <source>
        <dbReference type="UniProtKB" id="P0AFX0"/>
    </source>
</evidence>
<evidence type="ECO:0000305" key="2"/>
<dbReference type="EMBL" id="X16334">
    <property type="protein sequence ID" value="CAA34389.1"/>
    <property type="molecule type" value="Genomic_DNA"/>
</dbReference>
<dbReference type="EMBL" id="X05888">
    <property type="protein sequence ID" value="CAA29315.1"/>
    <property type="molecule type" value="Genomic_DNA"/>
</dbReference>
<dbReference type="PIR" id="S07663">
    <property type="entry name" value="S07663"/>
</dbReference>
<dbReference type="SMR" id="P17160"/>
<dbReference type="GO" id="GO:0022627">
    <property type="term" value="C:cytosolic small ribosomal subunit"/>
    <property type="evidence" value="ECO:0007669"/>
    <property type="project" value="TreeGrafter"/>
</dbReference>
<dbReference type="GO" id="GO:0043024">
    <property type="term" value="F:ribosomal small subunit binding"/>
    <property type="evidence" value="ECO:0007669"/>
    <property type="project" value="TreeGrafter"/>
</dbReference>
<dbReference type="GO" id="GO:0045900">
    <property type="term" value="P:negative regulation of translational elongation"/>
    <property type="evidence" value="ECO:0007669"/>
    <property type="project" value="TreeGrafter"/>
</dbReference>
<dbReference type="CDD" id="cd00552">
    <property type="entry name" value="RaiA"/>
    <property type="match status" value="1"/>
</dbReference>
<dbReference type="FunFam" id="3.30.160.100:FF:000001">
    <property type="entry name" value="Ribosome hibernation promoting factor"/>
    <property type="match status" value="1"/>
</dbReference>
<dbReference type="Gene3D" id="3.30.160.100">
    <property type="entry name" value="Ribosome hibernation promotion factor-like"/>
    <property type="match status" value="1"/>
</dbReference>
<dbReference type="InterPro" id="IPR050574">
    <property type="entry name" value="HPF/YfiA_ribosome-assoc"/>
</dbReference>
<dbReference type="InterPro" id="IPR036567">
    <property type="entry name" value="RHF-like"/>
</dbReference>
<dbReference type="InterPro" id="IPR003489">
    <property type="entry name" value="RHF/RaiA"/>
</dbReference>
<dbReference type="NCBIfam" id="TIGR00741">
    <property type="entry name" value="yfiA"/>
    <property type="match status" value="1"/>
</dbReference>
<dbReference type="PANTHER" id="PTHR33231">
    <property type="entry name" value="30S RIBOSOMAL PROTEIN"/>
    <property type="match status" value="1"/>
</dbReference>
<dbReference type="PANTHER" id="PTHR33231:SF1">
    <property type="entry name" value="30S RIBOSOMAL PROTEIN"/>
    <property type="match status" value="1"/>
</dbReference>
<dbReference type="Pfam" id="PF02482">
    <property type="entry name" value="Ribosomal_S30AE"/>
    <property type="match status" value="1"/>
</dbReference>
<dbReference type="SUPFAM" id="SSF69754">
    <property type="entry name" value="Ribosome binding protein Y (YfiA homologue)"/>
    <property type="match status" value="1"/>
</dbReference>
<name>HPF_AZOVI</name>
<organism>
    <name type="scientific">Azotobacter vinelandii</name>
    <dbReference type="NCBI Taxonomy" id="354"/>
    <lineage>
        <taxon>Bacteria</taxon>
        <taxon>Pseudomonadati</taxon>
        <taxon>Pseudomonadota</taxon>
        <taxon>Gammaproteobacteria</taxon>
        <taxon>Pseudomonadales</taxon>
        <taxon>Pseudomonadaceae</taxon>
        <taxon>Azotobacter</taxon>
    </lineage>
</organism>
<feature type="chain" id="PRO_0000097415" description="Ribosome hibernation promoting factor">
    <location>
        <begin position="1"/>
        <end position="107"/>
    </location>
</feature>
<comment type="function">
    <text evidence="1">During stationary phase, promotes and stabilizes dimerization of 70S ribosomes by the ribosome modulation factor (RMF), leading to the formation of inactive 100S ribosomes.</text>
</comment>
<comment type="subunit">
    <text evidence="1">Associates exclusively with 100S ribosomes, which are dimers of 70S ribosomes.</text>
</comment>
<comment type="similarity">
    <text evidence="2">Belongs to the HPF/YfiA ribosome-associated protein family. Short HPF subfamily.</text>
</comment>